<gene>
    <name evidence="1" type="primary">rpsR</name>
    <name type="ordered locus">PXO_00745</name>
</gene>
<proteinExistence type="inferred from homology"/>
<keyword id="KW-0687">Ribonucleoprotein</keyword>
<keyword id="KW-0689">Ribosomal protein</keyword>
<keyword id="KW-0694">RNA-binding</keyword>
<keyword id="KW-0699">rRNA-binding</keyword>
<accession>B2SIV1</accession>
<organism>
    <name type="scientific">Xanthomonas oryzae pv. oryzae (strain PXO99A)</name>
    <dbReference type="NCBI Taxonomy" id="360094"/>
    <lineage>
        <taxon>Bacteria</taxon>
        <taxon>Pseudomonadati</taxon>
        <taxon>Pseudomonadota</taxon>
        <taxon>Gammaproteobacteria</taxon>
        <taxon>Lysobacterales</taxon>
        <taxon>Lysobacteraceae</taxon>
        <taxon>Xanthomonas</taxon>
    </lineage>
</organism>
<feature type="chain" id="PRO_1000114467" description="Small ribosomal subunit protein bS18">
    <location>
        <begin position="1"/>
        <end position="76"/>
    </location>
</feature>
<evidence type="ECO:0000255" key="1">
    <source>
        <dbReference type="HAMAP-Rule" id="MF_00270"/>
    </source>
</evidence>
<evidence type="ECO:0000305" key="2"/>
<dbReference type="EMBL" id="CP000967">
    <property type="protein sequence ID" value="ACD58746.1"/>
    <property type="molecule type" value="Genomic_DNA"/>
</dbReference>
<dbReference type="RefSeq" id="WP_005991243.1">
    <property type="nucleotide sequence ID" value="NC_010717.2"/>
</dbReference>
<dbReference type="SMR" id="B2SIV1"/>
<dbReference type="GeneID" id="97211160"/>
<dbReference type="KEGG" id="xop:PXO_00745"/>
<dbReference type="eggNOG" id="COG0238">
    <property type="taxonomic scope" value="Bacteria"/>
</dbReference>
<dbReference type="HOGENOM" id="CLU_148710_2_3_6"/>
<dbReference type="Proteomes" id="UP000001740">
    <property type="component" value="Chromosome"/>
</dbReference>
<dbReference type="GO" id="GO:0022627">
    <property type="term" value="C:cytosolic small ribosomal subunit"/>
    <property type="evidence" value="ECO:0007669"/>
    <property type="project" value="TreeGrafter"/>
</dbReference>
<dbReference type="GO" id="GO:0070181">
    <property type="term" value="F:small ribosomal subunit rRNA binding"/>
    <property type="evidence" value="ECO:0007669"/>
    <property type="project" value="TreeGrafter"/>
</dbReference>
<dbReference type="GO" id="GO:0003735">
    <property type="term" value="F:structural constituent of ribosome"/>
    <property type="evidence" value="ECO:0007669"/>
    <property type="project" value="InterPro"/>
</dbReference>
<dbReference type="GO" id="GO:0006412">
    <property type="term" value="P:translation"/>
    <property type="evidence" value="ECO:0007669"/>
    <property type="project" value="UniProtKB-UniRule"/>
</dbReference>
<dbReference type="FunFam" id="4.10.640.10:FF:000001">
    <property type="entry name" value="30S ribosomal protein S18"/>
    <property type="match status" value="1"/>
</dbReference>
<dbReference type="Gene3D" id="4.10.640.10">
    <property type="entry name" value="Ribosomal protein S18"/>
    <property type="match status" value="1"/>
</dbReference>
<dbReference type="HAMAP" id="MF_00270">
    <property type="entry name" value="Ribosomal_bS18"/>
    <property type="match status" value="1"/>
</dbReference>
<dbReference type="InterPro" id="IPR001648">
    <property type="entry name" value="Ribosomal_bS18"/>
</dbReference>
<dbReference type="InterPro" id="IPR018275">
    <property type="entry name" value="Ribosomal_bS18_CS"/>
</dbReference>
<dbReference type="InterPro" id="IPR036870">
    <property type="entry name" value="Ribosomal_bS18_sf"/>
</dbReference>
<dbReference type="NCBIfam" id="TIGR00165">
    <property type="entry name" value="S18"/>
    <property type="match status" value="1"/>
</dbReference>
<dbReference type="PANTHER" id="PTHR13479">
    <property type="entry name" value="30S RIBOSOMAL PROTEIN S18"/>
    <property type="match status" value="1"/>
</dbReference>
<dbReference type="PANTHER" id="PTHR13479:SF40">
    <property type="entry name" value="SMALL RIBOSOMAL SUBUNIT PROTEIN BS18M"/>
    <property type="match status" value="1"/>
</dbReference>
<dbReference type="Pfam" id="PF01084">
    <property type="entry name" value="Ribosomal_S18"/>
    <property type="match status" value="1"/>
</dbReference>
<dbReference type="PRINTS" id="PR00974">
    <property type="entry name" value="RIBOSOMALS18"/>
</dbReference>
<dbReference type="SUPFAM" id="SSF46911">
    <property type="entry name" value="Ribosomal protein S18"/>
    <property type="match status" value="1"/>
</dbReference>
<dbReference type="PROSITE" id="PS00057">
    <property type="entry name" value="RIBOSOMAL_S18"/>
    <property type="match status" value="1"/>
</dbReference>
<comment type="function">
    <text evidence="1">Binds as a heterodimer with protein bS6 to the central domain of the 16S rRNA, where it helps stabilize the platform of the 30S subunit.</text>
</comment>
<comment type="subunit">
    <text evidence="1">Part of the 30S ribosomal subunit. Forms a tight heterodimer with protein bS6.</text>
</comment>
<comment type="similarity">
    <text evidence="1">Belongs to the bacterial ribosomal protein bS18 family.</text>
</comment>
<name>RS18_XANOP</name>
<protein>
    <recommendedName>
        <fullName evidence="1">Small ribosomal subunit protein bS18</fullName>
    </recommendedName>
    <alternativeName>
        <fullName evidence="2">30S ribosomal protein S18</fullName>
    </alternativeName>
</protein>
<sequence>MSKFFRRRKFCKFTAEGVKEIDYKDLNTLRQYLTENGKIVPSRVTGTKSKYQRQLATAVKRSRFLALIPYTDNHDV</sequence>
<reference key="1">
    <citation type="journal article" date="2008" name="BMC Genomics">
        <title>Genome sequence and rapid evolution of the rice pathogen Xanthomonas oryzae pv. oryzae PXO99A.</title>
        <authorList>
            <person name="Salzberg S.L."/>
            <person name="Sommer D.D."/>
            <person name="Schatz M.C."/>
            <person name="Phillippy A.M."/>
            <person name="Rabinowicz P.D."/>
            <person name="Tsuge S."/>
            <person name="Furutani A."/>
            <person name="Ochiai H."/>
            <person name="Delcher A.L."/>
            <person name="Kelley D."/>
            <person name="Madupu R."/>
            <person name="Puiu D."/>
            <person name="Radune D."/>
            <person name="Shumway M."/>
            <person name="Trapnell C."/>
            <person name="Aparna G."/>
            <person name="Jha G."/>
            <person name="Pandey A."/>
            <person name="Patil P.B."/>
            <person name="Ishihara H."/>
            <person name="Meyer D.F."/>
            <person name="Szurek B."/>
            <person name="Verdier V."/>
            <person name="Koebnik R."/>
            <person name="Dow J.M."/>
            <person name="Ryan R.P."/>
            <person name="Hirata H."/>
            <person name="Tsuyumu S."/>
            <person name="Won Lee S."/>
            <person name="Seo Y.-S."/>
            <person name="Sriariyanum M."/>
            <person name="Ronald P.C."/>
            <person name="Sonti R.V."/>
            <person name="Van Sluys M.-A."/>
            <person name="Leach J.E."/>
            <person name="White F.F."/>
            <person name="Bogdanove A.J."/>
        </authorList>
    </citation>
    <scope>NUCLEOTIDE SEQUENCE [LARGE SCALE GENOMIC DNA]</scope>
    <source>
        <strain>PXO99A</strain>
    </source>
</reference>